<sequence>MRHGMSGRKLNRDKSARKALFVSLANALLKHEQIKTTLPKAKDARPIVEKLITLGKRGDLHARRQAYAFLRDDKVVAKLFAVIGPRYKERQGGYCRVLKAGFRYGDCAPMAIIELVDRDLAAKGTDSGPTADKKADADEE</sequence>
<protein>
    <recommendedName>
        <fullName evidence="1">Large ribosomal subunit protein bL17</fullName>
    </recommendedName>
    <alternativeName>
        <fullName evidence="2">50S ribosomal protein L17</fullName>
    </alternativeName>
</protein>
<organism>
    <name type="scientific">Paramagnetospirillum magneticum (strain ATCC 700264 / AMB-1)</name>
    <name type="common">Magnetospirillum magneticum</name>
    <dbReference type="NCBI Taxonomy" id="342108"/>
    <lineage>
        <taxon>Bacteria</taxon>
        <taxon>Pseudomonadati</taxon>
        <taxon>Pseudomonadota</taxon>
        <taxon>Alphaproteobacteria</taxon>
        <taxon>Rhodospirillales</taxon>
        <taxon>Magnetospirillaceae</taxon>
        <taxon>Paramagnetospirillum</taxon>
    </lineage>
</organism>
<gene>
    <name evidence="1" type="primary">rplQ</name>
    <name type="ordered locus">amb3107</name>
</gene>
<accession>Q2W2L4</accession>
<feature type="chain" id="PRO_0000267889" description="Large ribosomal subunit protein bL17">
    <location>
        <begin position="1"/>
        <end position="140"/>
    </location>
</feature>
<reference key="1">
    <citation type="journal article" date="2005" name="DNA Res.">
        <title>Complete genome sequence of the facultative anaerobic magnetotactic bacterium Magnetospirillum sp. strain AMB-1.</title>
        <authorList>
            <person name="Matsunaga T."/>
            <person name="Okamura Y."/>
            <person name="Fukuda Y."/>
            <person name="Wahyudi A.T."/>
            <person name="Murase Y."/>
            <person name="Takeyama H."/>
        </authorList>
    </citation>
    <scope>NUCLEOTIDE SEQUENCE [LARGE SCALE GENOMIC DNA]</scope>
    <source>
        <strain>ATCC 700264 / AMB-1</strain>
    </source>
</reference>
<dbReference type="EMBL" id="AP007255">
    <property type="protein sequence ID" value="BAE51911.1"/>
    <property type="molecule type" value="Genomic_DNA"/>
</dbReference>
<dbReference type="RefSeq" id="WP_011385483.1">
    <property type="nucleotide sequence ID" value="NC_007626.1"/>
</dbReference>
<dbReference type="SMR" id="Q2W2L4"/>
<dbReference type="STRING" id="342108.amb3107"/>
<dbReference type="KEGG" id="mag:amb3107"/>
<dbReference type="HOGENOM" id="CLU_074407_2_0_5"/>
<dbReference type="OrthoDB" id="9809073at2"/>
<dbReference type="Proteomes" id="UP000007058">
    <property type="component" value="Chromosome"/>
</dbReference>
<dbReference type="GO" id="GO:0022625">
    <property type="term" value="C:cytosolic large ribosomal subunit"/>
    <property type="evidence" value="ECO:0007669"/>
    <property type="project" value="TreeGrafter"/>
</dbReference>
<dbReference type="GO" id="GO:0003735">
    <property type="term" value="F:structural constituent of ribosome"/>
    <property type="evidence" value="ECO:0007669"/>
    <property type="project" value="InterPro"/>
</dbReference>
<dbReference type="GO" id="GO:0006412">
    <property type="term" value="P:translation"/>
    <property type="evidence" value="ECO:0007669"/>
    <property type="project" value="UniProtKB-UniRule"/>
</dbReference>
<dbReference type="FunFam" id="3.90.1030.10:FF:000001">
    <property type="entry name" value="50S ribosomal protein L17"/>
    <property type="match status" value="1"/>
</dbReference>
<dbReference type="Gene3D" id="3.90.1030.10">
    <property type="entry name" value="Ribosomal protein L17"/>
    <property type="match status" value="1"/>
</dbReference>
<dbReference type="HAMAP" id="MF_01368">
    <property type="entry name" value="Ribosomal_bL17"/>
    <property type="match status" value="1"/>
</dbReference>
<dbReference type="InterPro" id="IPR000456">
    <property type="entry name" value="Ribosomal_bL17"/>
</dbReference>
<dbReference type="InterPro" id="IPR047859">
    <property type="entry name" value="Ribosomal_bL17_CS"/>
</dbReference>
<dbReference type="InterPro" id="IPR036373">
    <property type="entry name" value="Ribosomal_bL17_sf"/>
</dbReference>
<dbReference type="NCBIfam" id="TIGR00059">
    <property type="entry name" value="L17"/>
    <property type="match status" value="1"/>
</dbReference>
<dbReference type="PANTHER" id="PTHR14413:SF16">
    <property type="entry name" value="LARGE RIBOSOMAL SUBUNIT PROTEIN BL17M"/>
    <property type="match status" value="1"/>
</dbReference>
<dbReference type="PANTHER" id="PTHR14413">
    <property type="entry name" value="RIBOSOMAL PROTEIN L17"/>
    <property type="match status" value="1"/>
</dbReference>
<dbReference type="Pfam" id="PF01196">
    <property type="entry name" value="Ribosomal_L17"/>
    <property type="match status" value="1"/>
</dbReference>
<dbReference type="SUPFAM" id="SSF64263">
    <property type="entry name" value="Prokaryotic ribosomal protein L17"/>
    <property type="match status" value="1"/>
</dbReference>
<dbReference type="PROSITE" id="PS01167">
    <property type="entry name" value="RIBOSOMAL_L17"/>
    <property type="match status" value="1"/>
</dbReference>
<comment type="subunit">
    <text evidence="1">Part of the 50S ribosomal subunit. Contacts protein L32.</text>
</comment>
<comment type="similarity">
    <text evidence="1">Belongs to the bacterial ribosomal protein bL17 family.</text>
</comment>
<evidence type="ECO:0000255" key="1">
    <source>
        <dbReference type="HAMAP-Rule" id="MF_01368"/>
    </source>
</evidence>
<evidence type="ECO:0000305" key="2"/>
<proteinExistence type="inferred from homology"/>
<name>RL17_PARM1</name>
<keyword id="KW-0687">Ribonucleoprotein</keyword>
<keyword id="KW-0689">Ribosomal protein</keyword>